<keyword id="KW-1185">Reference proteome</keyword>
<proteinExistence type="uncertain"/>
<feature type="chain" id="PRO_0000070308" description="Putative protein TfaS">
    <location>
        <begin position="1"/>
        <end position="114"/>
    </location>
</feature>
<gene>
    <name type="primary">tfaS</name>
    <name type="ordered locus">b2353</name>
    <name type="ordered locus">JW5383</name>
</gene>
<evidence type="ECO:0000305" key="1"/>
<organism>
    <name type="scientific">Escherichia coli (strain K12)</name>
    <dbReference type="NCBI Taxonomy" id="83333"/>
    <lineage>
        <taxon>Bacteria</taxon>
        <taxon>Pseudomonadati</taxon>
        <taxon>Pseudomonadota</taxon>
        <taxon>Gammaproteobacteria</taxon>
        <taxon>Enterobacterales</taxon>
        <taxon>Enterobacteriaceae</taxon>
        <taxon>Escherichia</taxon>
    </lineage>
</organism>
<reference key="1">
    <citation type="journal article" date="1997" name="DNA Res.">
        <title>Construction of a contiguous 874-kb sequence of the Escherichia coli-K12 genome corresponding to 50.0-68.8 min on the linkage map and analysis of its sequence features.</title>
        <authorList>
            <person name="Yamamoto Y."/>
            <person name="Aiba H."/>
            <person name="Baba T."/>
            <person name="Hayashi K."/>
            <person name="Inada T."/>
            <person name="Isono K."/>
            <person name="Itoh T."/>
            <person name="Kimura S."/>
            <person name="Kitagawa M."/>
            <person name="Makino K."/>
            <person name="Miki T."/>
            <person name="Mitsuhashi N."/>
            <person name="Mizobuchi K."/>
            <person name="Mori H."/>
            <person name="Nakade S."/>
            <person name="Nakamura Y."/>
            <person name="Nashimoto H."/>
            <person name="Oshima T."/>
            <person name="Oyama S."/>
            <person name="Saito N."/>
            <person name="Sampei G."/>
            <person name="Satoh Y."/>
            <person name="Sivasundaram S."/>
            <person name="Tagami H."/>
            <person name="Takahashi H."/>
            <person name="Takeda J."/>
            <person name="Takemoto K."/>
            <person name="Uehara K."/>
            <person name="Wada C."/>
            <person name="Yamagata S."/>
            <person name="Horiuchi T."/>
        </authorList>
    </citation>
    <scope>NUCLEOTIDE SEQUENCE [LARGE SCALE GENOMIC DNA]</scope>
    <source>
        <strain>K12 / W3110 / ATCC 27325 / DSM 5911</strain>
    </source>
</reference>
<reference key="2">
    <citation type="journal article" date="1997" name="Science">
        <title>The complete genome sequence of Escherichia coli K-12.</title>
        <authorList>
            <person name="Blattner F.R."/>
            <person name="Plunkett G. III"/>
            <person name="Bloch C.A."/>
            <person name="Perna N.T."/>
            <person name="Burland V."/>
            <person name="Riley M."/>
            <person name="Collado-Vides J."/>
            <person name="Glasner J.D."/>
            <person name="Rode C.K."/>
            <person name="Mayhew G.F."/>
            <person name="Gregor J."/>
            <person name="Davis N.W."/>
            <person name="Kirkpatrick H.A."/>
            <person name="Goeden M.A."/>
            <person name="Rose D.J."/>
            <person name="Mau B."/>
            <person name="Shao Y."/>
        </authorList>
    </citation>
    <scope>NUCLEOTIDE SEQUENCE [LARGE SCALE GENOMIC DNA]</scope>
    <source>
        <strain>K12 / MG1655 / ATCC 47076</strain>
    </source>
</reference>
<reference key="3">
    <citation type="journal article" date="2006" name="Mol. Syst. Biol.">
        <title>Highly accurate genome sequences of Escherichia coli K-12 strains MG1655 and W3110.</title>
        <authorList>
            <person name="Hayashi K."/>
            <person name="Morooka N."/>
            <person name="Yamamoto Y."/>
            <person name="Fujita K."/>
            <person name="Isono K."/>
            <person name="Choi S."/>
            <person name="Ohtsubo E."/>
            <person name="Baba T."/>
            <person name="Wanner B.L."/>
            <person name="Mori H."/>
            <person name="Horiuchi T."/>
        </authorList>
    </citation>
    <scope>NUCLEOTIDE SEQUENCE [LARGE SCALE GENOMIC DNA]</scope>
    <source>
        <strain>K12 / W3110 / ATCC 27325 / DSM 5911</strain>
    </source>
</reference>
<name>TFAS_ECOLI</name>
<sequence>MILDRHITSRGYVCMRPATIAPLTPYDKWDGEKWVTDTEAQHSVAVDAAEAQRQSLIDTAMASISLIQLKLQAGRKLMQAETSRLNTVLDYIDAVTATDTSTAPDVIWPELPEE</sequence>
<comment type="similarity">
    <text evidence="1">Belongs to the tfa family.</text>
</comment>
<comment type="caution">
    <text evidence="1">Could be the product of a pseudogene.</text>
</comment>
<protein>
    <recommendedName>
        <fullName evidence="1">Putative protein TfaS</fullName>
    </recommendedName>
    <alternativeName>
        <fullName>Putative tail fiber assembly protein homolog from prophage CPS-53</fullName>
    </alternativeName>
</protein>
<accession>P77326</accession>
<dbReference type="EMBL" id="U00096">
    <property type="status" value="NOT_ANNOTATED_CDS"/>
    <property type="molecule type" value="Genomic_DNA"/>
</dbReference>
<dbReference type="EMBL" id="AP009048">
    <property type="status" value="NOT_ANNOTATED_CDS"/>
    <property type="molecule type" value="Genomic_DNA"/>
</dbReference>
<dbReference type="PIR" id="F65008">
    <property type="entry name" value="F65008"/>
</dbReference>
<dbReference type="SMR" id="P77326"/>
<dbReference type="FunCoup" id="P77326">
    <property type="interactions" value="32"/>
</dbReference>
<dbReference type="KEGG" id="ecoc:C3026_13090"/>
<dbReference type="PATRIC" id="fig|83333.103.peg.3239"/>
<dbReference type="InParanoid" id="P77326"/>
<dbReference type="PhylomeDB" id="P77326"/>
<dbReference type="Proteomes" id="UP000000625">
    <property type="component" value="Chromosome"/>
</dbReference>
<dbReference type="InterPro" id="IPR003458">
    <property type="entry name" value="Phage_T4_Gp38_tail_assem"/>
</dbReference>
<dbReference type="InterPro" id="IPR051220">
    <property type="entry name" value="TFA_Chaperone"/>
</dbReference>
<dbReference type="PANTHER" id="PTHR34413:SF2">
    <property type="entry name" value="PROPHAGE TAIL FIBER ASSEMBLY PROTEIN HOMOLOG TFAE-RELATED"/>
    <property type="match status" value="1"/>
</dbReference>
<dbReference type="PANTHER" id="PTHR34413">
    <property type="entry name" value="PROPHAGE TAIL FIBER ASSEMBLY PROTEIN HOMOLOG TFAE-RELATED-RELATED"/>
    <property type="match status" value="1"/>
</dbReference>
<dbReference type="Pfam" id="PF02413">
    <property type="entry name" value="Caudo_TAP"/>
    <property type="match status" value="1"/>
</dbReference>